<dbReference type="EC" id="1.12.7.2" evidence="1"/>
<dbReference type="EMBL" id="AE009950">
    <property type="protein sequence ID" value="AAL81557.1"/>
    <property type="molecule type" value="Genomic_DNA"/>
</dbReference>
<dbReference type="RefSeq" id="WP_011012580.1">
    <property type="nucleotide sequence ID" value="NZ_CP023154.1"/>
</dbReference>
<dbReference type="PDB" id="6CFW">
    <property type="method" value="EM"/>
    <property type="resolution" value="3.70 A"/>
    <property type="chains" value="K=1-173"/>
</dbReference>
<dbReference type="PDBsum" id="6CFW"/>
<dbReference type="EMDB" id="EMD-7468"/>
<dbReference type="SMR" id="Q8U0Z7"/>
<dbReference type="STRING" id="186497.PF1433"/>
<dbReference type="TCDB" id="3.D.1.4.1">
    <property type="family name" value="the h+ or na+-translocating nadh dehydrogenase (ndh) family"/>
</dbReference>
<dbReference type="PaxDb" id="186497-PF1433"/>
<dbReference type="DNASU" id="1469309"/>
<dbReference type="KEGG" id="pfu:PF1433"/>
<dbReference type="PATRIC" id="fig|186497.12.peg.1495"/>
<dbReference type="eggNOG" id="arCOG01552">
    <property type="taxonomic scope" value="Archaea"/>
</dbReference>
<dbReference type="HOGENOM" id="CLU_097415_1_0_2"/>
<dbReference type="OrthoDB" id="43567at2157"/>
<dbReference type="PhylomeDB" id="Q8U0Z7"/>
<dbReference type="BRENDA" id="1.12.7.2">
    <property type="organism ID" value="5243"/>
</dbReference>
<dbReference type="Proteomes" id="UP000001013">
    <property type="component" value="Chromosome"/>
</dbReference>
<dbReference type="GO" id="GO:0009375">
    <property type="term" value="C:ferredoxin hydrogenase complex"/>
    <property type="evidence" value="ECO:0000314"/>
    <property type="project" value="UniProtKB"/>
</dbReference>
<dbReference type="GO" id="GO:0005886">
    <property type="term" value="C:plasma membrane"/>
    <property type="evidence" value="ECO:0007669"/>
    <property type="project" value="UniProtKB-SubCell"/>
</dbReference>
<dbReference type="GO" id="GO:0008901">
    <property type="term" value="F:ferredoxin hydrogenase activity"/>
    <property type="evidence" value="ECO:0000314"/>
    <property type="project" value="UniProtKB"/>
</dbReference>
<dbReference type="GO" id="GO:0046872">
    <property type="term" value="F:metal ion binding"/>
    <property type="evidence" value="ECO:0007669"/>
    <property type="project" value="UniProtKB-KW"/>
</dbReference>
<dbReference type="GO" id="GO:0008137">
    <property type="term" value="F:NADH dehydrogenase (ubiquinone) activity"/>
    <property type="evidence" value="ECO:0007669"/>
    <property type="project" value="InterPro"/>
</dbReference>
<dbReference type="GO" id="GO:0015986">
    <property type="term" value="P:proton motive force-driven ATP synthesis"/>
    <property type="evidence" value="ECO:0000314"/>
    <property type="project" value="UniProtKB"/>
</dbReference>
<dbReference type="Gene3D" id="3.30.460.80">
    <property type="entry name" value="NADH:ubiquinone oxidoreductase, 30kDa subunit"/>
    <property type="match status" value="1"/>
</dbReference>
<dbReference type="InterPro" id="IPR037232">
    <property type="entry name" value="NADH_quin_OxRdtase_su_C/D-like"/>
</dbReference>
<dbReference type="InterPro" id="IPR001268">
    <property type="entry name" value="NADH_UbQ_OxRdtase_30kDa_su"/>
</dbReference>
<dbReference type="PANTHER" id="PTHR10884:SF14">
    <property type="entry name" value="NADH DEHYDROGENASE [UBIQUINONE] IRON-SULFUR PROTEIN 3, MITOCHONDRIAL"/>
    <property type="match status" value="1"/>
</dbReference>
<dbReference type="PANTHER" id="PTHR10884">
    <property type="entry name" value="NADH DEHYDROGENASE UBIQUINONE IRON-SULFUR PROTEIN 3"/>
    <property type="match status" value="1"/>
</dbReference>
<dbReference type="Pfam" id="PF00329">
    <property type="entry name" value="Complex1_30kDa"/>
    <property type="match status" value="1"/>
</dbReference>
<dbReference type="SUPFAM" id="SSF143243">
    <property type="entry name" value="Nqo5-like"/>
    <property type="match status" value="1"/>
</dbReference>
<accession>Q8U0Z7</accession>
<sequence length="173" mass="20184">MSKAEMVANKIKERFPNAEVVVKTNKWGRERVWVRISREEYKELMKFIRELDPEAHYSIGIEQDWGDELGFLNHILLFYDEPPGVSLLIDVHAPKDNPVLPDTSDIFPISLQFEREGMEMVGLDFEGAPDKRRLFLPDDFPEGIYPLRTDEKGVPEEMVKNAGHPYLLRREKK</sequence>
<comment type="function">
    <text evidence="1 2 3">Beta subunit of a hydrogen-evolving hydrogenase that utilizes protons both as a substrate for hydrogen production and proton translocation. Acts by coupling the redox reaction via ferredoxin and iron-sulfur (Fe-S) clusters to proton translocation across the membrane thereby conserving the redox energy in a proton gradient.</text>
</comment>
<comment type="catalytic activity">
    <reaction evidence="1 2 3">
        <text>H2 + 2 oxidized [2Fe-2S]-[ferredoxin] = 2 reduced [2Fe-2S]-[ferredoxin] + 2 H(+)</text>
        <dbReference type="Rhea" id="RHEA:17445"/>
        <dbReference type="Rhea" id="RHEA-COMP:10000"/>
        <dbReference type="Rhea" id="RHEA-COMP:10001"/>
        <dbReference type="ChEBI" id="CHEBI:15378"/>
        <dbReference type="ChEBI" id="CHEBI:18276"/>
        <dbReference type="ChEBI" id="CHEBI:33737"/>
        <dbReference type="ChEBI" id="CHEBI:33738"/>
        <dbReference type="EC" id="1.12.7.2"/>
    </reaction>
</comment>
<comment type="cofactor">
    <cofactor evidence="1">
        <name>Ni(2+)</name>
        <dbReference type="ChEBI" id="CHEBI:49786"/>
    </cofactor>
    <text evidence="1">Binds 1 nickel ion per mole of protein.</text>
</comment>
<comment type="activity regulation">
    <text evidence="3">Inhibited by 0.1 mM Cu(2+).</text>
</comment>
<comment type="biophysicochemical properties">
    <kinetics>
        <KM evidence="1 2">36 uM for ferredoxin</KM>
        <text evidence="2">Measured for the whole complex.</text>
    </kinetics>
    <phDependence>
        <text evidence="1 2">Optimum pH is 7.0. Active between pH 6.0-8.5.</text>
    </phDependence>
    <temperatureDependence>
        <text evidence="1 2">Optimum temperature is 90 degrees Celsius for membrane-bound enzyme but 80 degrees Celsius for the purified enzyme. Membrane-bound enzyme has a half-life of 2h at 100 degrees Celsius whereas the half-life of the purified enzyme is 30 minutes at 100 degrees Celsius.</text>
    </temperatureDependence>
</comment>
<comment type="subunit">
    <text evidence="1">The membrane-bound hydrogenase complex is composed of MbhK and MbhL, and may also contain MbhJ.</text>
</comment>
<comment type="subcellular location">
    <subcellularLocation>
        <location evidence="1 2">Cell membrane</location>
    </subcellularLocation>
</comment>
<comment type="similarity">
    <text evidence="6">Belongs to the complex I 30 kDa subunit family.</text>
</comment>
<comment type="caution">
    <text evidence="7 8">The subunit composition of membrane-bound hydrogenase complex is currently unclear. It has been shown to be a heterodimer of MbhK and MbhL (PubMed:10852873). Other studies have shown it to contain MbhJ in addition to MbhK and MbhL (PubMed:11054105).</text>
</comment>
<comment type="caution">
    <text evidence="6 7 8">There is conflicting N-terminal sequencing data for this protein. The mature protein may start from Ser-2 (PubMed:10852873) or Lys-3 (PubMed:11054105).</text>
</comment>
<proteinExistence type="evidence at protein level"/>
<reference evidence="9" key="1">
    <citation type="journal article" date="1999" name="Genetics">
        <title>Divergence of the hyperthermophilic archaea Pyrococcus furiosus and P. horikoshii inferred from complete genomic sequences.</title>
        <authorList>
            <person name="Maeder D.L."/>
            <person name="Weiss R.B."/>
            <person name="Dunn D.M."/>
            <person name="Cherry J.L."/>
            <person name="Gonzalez J.M."/>
            <person name="DiRuggiero J."/>
            <person name="Robb F.T."/>
        </authorList>
    </citation>
    <scope>NUCLEOTIDE SEQUENCE [LARGE SCALE GENOMIC DNA]</scope>
    <source>
        <strain>ATCC 43587 / DSM 3638 / JCM 8422 / Vc1</strain>
    </source>
</reference>
<reference evidence="6" key="2">
    <citation type="journal article" date="2000" name="J. Bacteriol.">
        <title>Purification and characterization of a membrane-bound hydrogenase from the hyperthermophilic archaeon Pyrococcus furiosus.</title>
        <authorList>
            <person name="Sapra R."/>
            <person name="Verhagen M.F."/>
            <person name="Adams M.W."/>
        </authorList>
    </citation>
    <scope>PROTEIN SEQUENCE OF 2-11</scope>
    <scope>FUNCTION</scope>
    <scope>CATALYTIC ACTIVITY</scope>
    <scope>COFACTOR</scope>
    <scope>BIOPHYSICOCHEMICAL PROPERTIES</scope>
    <scope>SUBUNIT</scope>
    <scope>SUBCELLULAR LOCATION</scope>
    <scope>EPR SPECTROSCOPY</scope>
    <source>
        <strain evidence="1">ATCC 43587 / DSM 3638 / JCM 8422 / Vc1</strain>
    </source>
</reference>
<reference evidence="6" key="3">
    <citation type="journal article" date="2000" name="Eur. J. Biochem.">
        <title>Enzymes of hydrogen metabolism in Pyrococcus furiosus.</title>
        <authorList>
            <person name="Silva P.J."/>
            <person name="van den Ban E.C."/>
            <person name="Wassink H."/>
            <person name="Haaker H."/>
            <person name="de Castro B."/>
            <person name="Robb F.T."/>
            <person name="Hagen W.R."/>
        </authorList>
    </citation>
    <scope>PROTEIN SEQUENCE OF 3-25</scope>
    <scope>FUNCTION</scope>
    <scope>CATALYTIC ACTIVITY</scope>
    <scope>BIOPHYSICOCHEMICAL PROPERTIES</scope>
    <scope>SUBCELLULAR LOCATION</scope>
    <scope>EPR SPECTROSCOPY</scope>
    <source>
        <strain evidence="2">ATCC 43587 / DSM 3638 / JCM 8422 / Vc1</strain>
    </source>
</reference>
<reference evidence="6" key="4">
    <citation type="journal article" date="2003" name="Proc. Natl. Acad. Sci. U.S.A.">
        <title>A simple energy-conserving system: proton reduction coupled to proton translocation.</title>
        <authorList>
            <person name="Sapra R."/>
            <person name="Bagramyan K."/>
            <person name="Adams M.W."/>
        </authorList>
    </citation>
    <scope>FUNCTION</scope>
    <scope>CATALYTIC ACTIVITY</scope>
    <scope>ACTIVITY REGULATION</scope>
    <source>
        <strain evidence="3">ATCC 43587 / DSM 3638 / JCM 8422 / Vc1</strain>
    </source>
</reference>
<keyword id="KW-0002">3D-structure</keyword>
<keyword id="KW-1003">Cell membrane</keyword>
<keyword id="KW-0903">Direct protein sequencing</keyword>
<keyword id="KW-0472">Membrane</keyword>
<keyword id="KW-0479">Metal-binding</keyword>
<keyword id="KW-0533">Nickel</keyword>
<keyword id="KW-0560">Oxidoreductase</keyword>
<keyword id="KW-1185">Reference proteome</keyword>
<feature type="initiator methionine" description="Removed" evidence="1">
    <location>
        <position position="1"/>
    </location>
</feature>
<feature type="chain" id="PRO_0000420792" description="Membrane-bound hydrogenase subunit beta" evidence="1">
    <location>
        <begin position="2"/>
        <end position="173"/>
    </location>
</feature>
<feature type="sequence conflict" description="In Ref. 3; AA sequence." evidence="2" ref="3">
    <original>KT</original>
    <variation>GD</variation>
    <location>
        <begin position="23"/>
        <end position="24"/>
    </location>
</feature>
<protein>
    <recommendedName>
        <fullName evidence="4">Membrane-bound hydrogenase subunit beta</fullName>
        <ecNumber evidence="1">1.12.7.2</ecNumber>
    </recommendedName>
</protein>
<evidence type="ECO:0000269" key="1">
    <source>
    </source>
</evidence>
<evidence type="ECO:0000269" key="2">
    <source>
    </source>
</evidence>
<evidence type="ECO:0000269" key="3">
    <source>
    </source>
</evidence>
<evidence type="ECO:0000303" key="4">
    <source>
    </source>
</evidence>
<evidence type="ECO:0000303" key="5">
    <source>
    </source>
</evidence>
<evidence type="ECO:0000305" key="6"/>
<evidence type="ECO:0000305" key="7">
    <source>
    </source>
</evidence>
<evidence type="ECO:0000305" key="8">
    <source>
    </source>
</evidence>
<evidence type="ECO:0000312" key="9">
    <source>
        <dbReference type="EMBL" id="AAL81557.1"/>
    </source>
</evidence>
<organism>
    <name type="scientific">Pyrococcus furiosus (strain ATCC 43587 / DSM 3638 / JCM 8422 / Vc1)</name>
    <dbReference type="NCBI Taxonomy" id="186497"/>
    <lineage>
        <taxon>Archaea</taxon>
        <taxon>Methanobacteriati</taxon>
        <taxon>Methanobacteriota</taxon>
        <taxon>Thermococci</taxon>
        <taxon>Thermococcales</taxon>
        <taxon>Thermococcaceae</taxon>
        <taxon>Pyrococcus</taxon>
    </lineage>
</organism>
<name>MBHLB_PYRFU</name>
<gene>
    <name evidence="5" type="primary">mbhK</name>
    <name evidence="4" type="synonym">mbh11</name>
    <name type="ordered locus">PF1433</name>
</gene>